<feature type="chain" id="PRO_1000008280" description="Translation initiation factor IF-2">
    <location>
        <begin position="1"/>
        <end position="620"/>
    </location>
</feature>
<feature type="domain" description="tr-type G">
    <location>
        <begin position="119"/>
        <end position="288"/>
    </location>
</feature>
<feature type="region of interest" description="G1" evidence="1">
    <location>
        <begin position="128"/>
        <end position="135"/>
    </location>
</feature>
<feature type="region of interest" description="G2" evidence="1">
    <location>
        <begin position="153"/>
        <end position="157"/>
    </location>
</feature>
<feature type="region of interest" description="G3" evidence="1">
    <location>
        <begin position="175"/>
        <end position="178"/>
    </location>
</feature>
<feature type="region of interest" description="G4" evidence="1">
    <location>
        <begin position="229"/>
        <end position="232"/>
    </location>
</feature>
<feature type="region of interest" description="G5" evidence="1">
    <location>
        <begin position="265"/>
        <end position="267"/>
    </location>
</feature>
<feature type="binding site" evidence="2">
    <location>
        <begin position="128"/>
        <end position="135"/>
    </location>
    <ligand>
        <name>GTP</name>
        <dbReference type="ChEBI" id="CHEBI:37565"/>
    </ligand>
</feature>
<feature type="binding site" evidence="2">
    <location>
        <begin position="175"/>
        <end position="179"/>
    </location>
    <ligand>
        <name>GTP</name>
        <dbReference type="ChEBI" id="CHEBI:37565"/>
    </ligand>
</feature>
<feature type="binding site" evidence="2">
    <location>
        <begin position="229"/>
        <end position="232"/>
    </location>
    <ligand>
        <name>GTP</name>
        <dbReference type="ChEBI" id="CHEBI:37565"/>
    </ligand>
</feature>
<comment type="function">
    <text evidence="2">One of the essential components for the initiation of protein synthesis. Protects formylmethionyl-tRNA from spontaneous hydrolysis and promotes its binding to the 30S ribosomal subunits. Also involved in the hydrolysis of GTP during the formation of the 70S ribosomal complex.</text>
</comment>
<comment type="subcellular location">
    <subcellularLocation>
        <location evidence="2">Cytoplasm</location>
    </subcellularLocation>
</comment>
<comment type="similarity">
    <text evidence="2">Belongs to the TRAFAC class translation factor GTPase superfamily. Classic translation factor GTPase family. IF-2 subfamily.</text>
</comment>
<gene>
    <name evidence="2" type="primary">infB</name>
    <name type="ordered locus">MCAP_0333</name>
</gene>
<evidence type="ECO:0000250" key="1"/>
<evidence type="ECO:0000255" key="2">
    <source>
        <dbReference type="HAMAP-Rule" id="MF_00100"/>
    </source>
</evidence>
<name>IF2_MYCCT</name>
<sequence>MKKPVKNIKKQKAQNQTKNIKKQLKEEVNTGLIDGIFVYTEPLSILEFATKINKPVTVILKHYFNQGLLLNQNTLLTEEQMGELCLEFGFDFKKETSVTKENILETLLDTVDDEKHLKERPPIVTIMGHVDHGKTTLLDSIKNSNVVASEAGGITQAIGAYQITTKNNKKITFIDTPGHEAFTEMRSRGANVTDIVVLIVAADDGVMPQTEEAIDHAKLANVPIIVFINKIDKPGSDPNRVKTELMKYGLVAEEFGGDIPFIEGSAIKKINLDKLEDTIILISELENLKANPDRFASGVVLEAHLDKAKGPVASVLVQQGSLEIKDIMVVGTTFGSIKHIEDEFKHKVLKAEPSKPVVVYGLNQVPKAGDKFVVINDEKMAREISEAQLKKQQEEERRTKQAFTLDAIKQHIDEGELKNITLIIKADTQGSVEALKNSLSKINISGVKINIIRASVGAISLSDISLASTVRDGLVIVYGFNVRPDAIVRKKAEEDRIEIRLHNIIYKLIEELEDAAKGILDPEIKEVVLGQAQVRALFRHSAIGTIGGFYVVDGAITRNAKIRVIRNGVVVYDGEINSLQHQKQDAKEVKAGFEGALTIKNFNDIKEGDIFEAYKLEQVK</sequence>
<keyword id="KW-0963">Cytoplasm</keyword>
<keyword id="KW-0342">GTP-binding</keyword>
<keyword id="KW-0396">Initiation factor</keyword>
<keyword id="KW-0547">Nucleotide-binding</keyword>
<keyword id="KW-0648">Protein biosynthesis</keyword>
<protein>
    <recommendedName>
        <fullName evidence="2">Translation initiation factor IF-2</fullName>
    </recommendedName>
</protein>
<dbReference type="EMBL" id="CP000123">
    <property type="protein sequence ID" value="ABC01401.1"/>
    <property type="molecule type" value="Genomic_DNA"/>
</dbReference>
<dbReference type="RefSeq" id="WP_011387218.1">
    <property type="nucleotide sequence ID" value="NC_007633.1"/>
</dbReference>
<dbReference type="SMR" id="Q2SSE6"/>
<dbReference type="GeneID" id="23778711"/>
<dbReference type="KEGG" id="mcp:MCAP_0333"/>
<dbReference type="HOGENOM" id="CLU_006301_5_1_14"/>
<dbReference type="PhylomeDB" id="Q2SSE6"/>
<dbReference type="Proteomes" id="UP000001928">
    <property type="component" value="Chromosome"/>
</dbReference>
<dbReference type="GO" id="GO:0005829">
    <property type="term" value="C:cytosol"/>
    <property type="evidence" value="ECO:0007669"/>
    <property type="project" value="TreeGrafter"/>
</dbReference>
<dbReference type="GO" id="GO:0005525">
    <property type="term" value="F:GTP binding"/>
    <property type="evidence" value="ECO:0007669"/>
    <property type="project" value="UniProtKB-KW"/>
</dbReference>
<dbReference type="GO" id="GO:0003924">
    <property type="term" value="F:GTPase activity"/>
    <property type="evidence" value="ECO:0007669"/>
    <property type="project" value="UniProtKB-UniRule"/>
</dbReference>
<dbReference type="GO" id="GO:0003743">
    <property type="term" value="F:translation initiation factor activity"/>
    <property type="evidence" value="ECO:0007669"/>
    <property type="project" value="UniProtKB-UniRule"/>
</dbReference>
<dbReference type="CDD" id="cd01887">
    <property type="entry name" value="IF2_eIF5B"/>
    <property type="match status" value="1"/>
</dbReference>
<dbReference type="CDD" id="cd03702">
    <property type="entry name" value="IF2_mtIF2_II"/>
    <property type="match status" value="1"/>
</dbReference>
<dbReference type="CDD" id="cd03692">
    <property type="entry name" value="mtIF2_IVc"/>
    <property type="match status" value="1"/>
</dbReference>
<dbReference type="FunFam" id="2.40.30.10:FF:000008">
    <property type="entry name" value="Translation initiation factor IF-2"/>
    <property type="match status" value="1"/>
</dbReference>
<dbReference type="FunFam" id="2.40.30.10:FF:000054">
    <property type="entry name" value="Translation initiation factor IF-2"/>
    <property type="match status" value="1"/>
</dbReference>
<dbReference type="FunFam" id="3.40.50.10050:FF:000001">
    <property type="entry name" value="Translation initiation factor IF-2"/>
    <property type="match status" value="1"/>
</dbReference>
<dbReference type="FunFam" id="3.40.50.300:FF:000019">
    <property type="entry name" value="Translation initiation factor IF-2"/>
    <property type="match status" value="1"/>
</dbReference>
<dbReference type="Gene3D" id="3.40.50.300">
    <property type="entry name" value="P-loop containing nucleotide triphosphate hydrolases"/>
    <property type="match status" value="1"/>
</dbReference>
<dbReference type="Gene3D" id="2.40.30.10">
    <property type="entry name" value="Translation factors"/>
    <property type="match status" value="2"/>
</dbReference>
<dbReference type="Gene3D" id="3.40.50.10050">
    <property type="entry name" value="Translation initiation factor IF- 2, domain 3"/>
    <property type="match status" value="1"/>
</dbReference>
<dbReference type="HAMAP" id="MF_00100_B">
    <property type="entry name" value="IF_2_B"/>
    <property type="match status" value="1"/>
</dbReference>
<dbReference type="InterPro" id="IPR053905">
    <property type="entry name" value="EF-G-like_DII"/>
</dbReference>
<dbReference type="InterPro" id="IPR044145">
    <property type="entry name" value="IF2_II"/>
</dbReference>
<dbReference type="InterPro" id="IPR006847">
    <property type="entry name" value="IF2_N"/>
</dbReference>
<dbReference type="InterPro" id="IPR027417">
    <property type="entry name" value="P-loop_NTPase"/>
</dbReference>
<dbReference type="InterPro" id="IPR005225">
    <property type="entry name" value="Small_GTP-bd"/>
</dbReference>
<dbReference type="InterPro" id="IPR000795">
    <property type="entry name" value="T_Tr_GTP-bd_dom"/>
</dbReference>
<dbReference type="InterPro" id="IPR000178">
    <property type="entry name" value="TF_IF2_bacterial-like"/>
</dbReference>
<dbReference type="InterPro" id="IPR015760">
    <property type="entry name" value="TIF_IF2"/>
</dbReference>
<dbReference type="InterPro" id="IPR023115">
    <property type="entry name" value="TIF_IF2_dom3"/>
</dbReference>
<dbReference type="InterPro" id="IPR036925">
    <property type="entry name" value="TIF_IF2_dom3_sf"/>
</dbReference>
<dbReference type="InterPro" id="IPR009000">
    <property type="entry name" value="Transl_B-barrel_sf"/>
</dbReference>
<dbReference type="NCBIfam" id="TIGR00487">
    <property type="entry name" value="IF-2"/>
    <property type="match status" value="1"/>
</dbReference>
<dbReference type="NCBIfam" id="TIGR00231">
    <property type="entry name" value="small_GTP"/>
    <property type="match status" value="1"/>
</dbReference>
<dbReference type="PANTHER" id="PTHR43381:SF5">
    <property type="entry name" value="TR-TYPE G DOMAIN-CONTAINING PROTEIN"/>
    <property type="match status" value="1"/>
</dbReference>
<dbReference type="PANTHER" id="PTHR43381">
    <property type="entry name" value="TRANSLATION INITIATION FACTOR IF-2-RELATED"/>
    <property type="match status" value="1"/>
</dbReference>
<dbReference type="Pfam" id="PF22042">
    <property type="entry name" value="EF-G_D2"/>
    <property type="match status" value="1"/>
</dbReference>
<dbReference type="Pfam" id="PF00009">
    <property type="entry name" value="GTP_EFTU"/>
    <property type="match status" value="1"/>
</dbReference>
<dbReference type="Pfam" id="PF11987">
    <property type="entry name" value="IF-2"/>
    <property type="match status" value="1"/>
</dbReference>
<dbReference type="Pfam" id="PF04760">
    <property type="entry name" value="IF2_N"/>
    <property type="match status" value="1"/>
</dbReference>
<dbReference type="SUPFAM" id="SSF52156">
    <property type="entry name" value="Initiation factor IF2/eIF5b, domain 3"/>
    <property type="match status" value="1"/>
</dbReference>
<dbReference type="SUPFAM" id="SSF52540">
    <property type="entry name" value="P-loop containing nucleoside triphosphate hydrolases"/>
    <property type="match status" value="1"/>
</dbReference>
<dbReference type="SUPFAM" id="SSF50447">
    <property type="entry name" value="Translation proteins"/>
    <property type="match status" value="2"/>
</dbReference>
<dbReference type="PROSITE" id="PS51722">
    <property type="entry name" value="G_TR_2"/>
    <property type="match status" value="1"/>
</dbReference>
<proteinExistence type="inferred from homology"/>
<reference key="1">
    <citation type="submission" date="2005-09" db="EMBL/GenBank/DDBJ databases">
        <authorList>
            <person name="Glass J.I."/>
            <person name="Lartigue C."/>
            <person name="Pfannkoch C."/>
            <person name="Baden-Tillson H."/>
            <person name="Smith H.O."/>
            <person name="Venter J.C."/>
            <person name="Roske K."/>
            <person name="Wise K.S."/>
            <person name="Calcutt M.J."/>
            <person name="Nelson W.C."/>
            <person name="Nierman W.C."/>
        </authorList>
    </citation>
    <scope>NUCLEOTIDE SEQUENCE [LARGE SCALE GENOMIC DNA]</scope>
    <source>
        <strain>California kid / ATCC 27343 / NCTC 10154</strain>
    </source>
</reference>
<accession>Q2SSE6</accession>
<organism>
    <name type="scientific">Mycoplasma capricolum subsp. capricolum (strain California kid / ATCC 27343 / NCTC 10154)</name>
    <dbReference type="NCBI Taxonomy" id="340047"/>
    <lineage>
        <taxon>Bacteria</taxon>
        <taxon>Bacillati</taxon>
        <taxon>Mycoplasmatota</taxon>
        <taxon>Mollicutes</taxon>
        <taxon>Mycoplasmataceae</taxon>
        <taxon>Mycoplasma</taxon>
    </lineage>
</organism>